<gene>
    <name evidence="1" type="primary">rpmE</name>
    <name type="ordered locus">Gbem_3712</name>
</gene>
<reference key="1">
    <citation type="submission" date="2008-07" db="EMBL/GenBank/DDBJ databases">
        <title>Complete sequence of Geobacter bemidjiensis BEM.</title>
        <authorList>
            <consortium name="US DOE Joint Genome Institute"/>
            <person name="Lucas S."/>
            <person name="Copeland A."/>
            <person name="Lapidus A."/>
            <person name="Glavina del Rio T."/>
            <person name="Dalin E."/>
            <person name="Tice H."/>
            <person name="Bruce D."/>
            <person name="Goodwin L."/>
            <person name="Pitluck S."/>
            <person name="Kiss H."/>
            <person name="Brettin T."/>
            <person name="Detter J.C."/>
            <person name="Han C."/>
            <person name="Kuske C.R."/>
            <person name="Schmutz J."/>
            <person name="Larimer F."/>
            <person name="Land M."/>
            <person name="Hauser L."/>
            <person name="Kyrpides N."/>
            <person name="Lykidis A."/>
            <person name="Lovley D."/>
            <person name="Richardson P."/>
        </authorList>
    </citation>
    <scope>NUCLEOTIDE SEQUENCE [LARGE SCALE GENOMIC DNA]</scope>
    <source>
        <strain>ATCC BAA-1014 / DSM 16622 / JCM 12645 / Bem</strain>
    </source>
</reference>
<organism>
    <name type="scientific">Citrifermentans bemidjiense (strain ATCC BAA-1014 / DSM 16622 / JCM 12645 / Bem)</name>
    <name type="common">Geobacter bemidjiensis</name>
    <dbReference type="NCBI Taxonomy" id="404380"/>
    <lineage>
        <taxon>Bacteria</taxon>
        <taxon>Pseudomonadati</taxon>
        <taxon>Thermodesulfobacteriota</taxon>
        <taxon>Desulfuromonadia</taxon>
        <taxon>Geobacterales</taxon>
        <taxon>Geobacteraceae</taxon>
        <taxon>Citrifermentans</taxon>
    </lineage>
</organism>
<accession>B5EDS6</accession>
<evidence type="ECO:0000255" key="1">
    <source>
        <dbReference type="HAMAP-Rule" id="MF_00501"/>
    </source>
</evidence>
<evidence type="ECO:0000305" key="2"/>
<name>RL31_CITBB</name>
<proteinExistence type="inferred from homology"/>
<feature type="chain" id="PRO_1000126634" description="Large ribosomal subunit protein bL31">
    <location>
        <begin position="1"/>
        <end position="73"/>
    </location>
</feature>
<feature type="binding site" evidence="1">
    <location>
        <position position="16"/>
    </location>
    <ligand>
        <name>Zn(2+)</name>
        <dbReference type="ChEBI" id="CHEBI:29105"/>
    </ligand>
</feature>
<feature type="binding site" evidence="1">
    <location>
        <position position="18"/>
    </location>
    <ligand>
        <name>Zn(2+)</name>
        <dbReference type="ChEBI" id="CHEBI:29105"/>
    </ligand>
</feature>
<feature type="binding site" evidence="1">
    <location>
        <position position="36"/>
    </location>
    <ligand>
        <name>Zn(2+)</name>
        <dbReference type="ChEBI" id="CHEBI:29105"/>
    </ligand>
</feature>
<feature type="binding site" evidence="1">
    <location>
        <position position="39"/>
    </location>
    <ligand>
        <name>Zn(2+)</name>
        <dbReference type="ChEBI" id="CHEBI:29105"/>
    </ligand>
</feature>
<keyword id="KW-0479">Metal-binding</keyword>
<keyword id="KW-1185">Reference proteome</keyword>
<keyword id="KW-0687">Ribonucleoprotein</keyword>
<keyword id="KW-0689">Ribosomal protein</keyword>
<keyword id="KW-0694">RNA-binding</keyword>
<keyword id="KW-0699">rRNA-binding</keyword>
<keyword id="KW-0862">Zinc</keyword>
<sequence length="73" mass="8303">MKEGIHPKYNEITVKCLCGNSFESRSTKAEISTEVCSQCHPFYTGKQKLMDTAGRVERFRKRYNIAAAPTEES</sequence>
<dbReference type="EMBL" id="CP001124">
    <property type="protein sequence ID" value="ACH40704.1"/>
    <property type="molecule type" value="Genomic_DNA"/>
</dbReference>
<dbReference type="RefSeq" id="WP_012532141.1">
    <property type="nucleotide sequence ID" value="NC_011146.1"/>
</dbReference>
<dbReference type="SMR" id="B5EDS6"/>
<dbReference type="STRING" id="404380.Gbem_3712"/>
<dbReference type="KEGG" id="gbm:Gbem_3712"/>
<dbReference type="eggNOG" id="COG0254">
    <property type="taxonomic scope" value="Bacteria"/>
</dbReference>
<dbReference type="HOGENOM" id="CLU_114306_4_3_7"/>
<dbReference type="OrthoDB" id="9803251at2"/>
<dbReference type="Proteomes" id="UP000008825">
    <property type="component" value="Chromosome"/>
</dbReference>
<dbReference type="GO" id="GO:1990904">
    <property type="term" value="C:ribonucleoprotein complex"/>
    <property type="evidence" value="ECO:0007669"/>
    <property type="project" value="UniProtKB-KW"/>
</dbReference>
<dbReference type="GO" id="GO:0005840">
    <property type="term" value="C:ribosome"/>
    <property type="evidence" value="ECO:0007669"/>
    <property type="project" value="UniProtKB-KW"/>
</dbReference>
<dbReference type="GO" id="GO:0046872">
    <property type="term" value="F:metal ion binding"/>
    <property type="evidence" value="ECO:0007669"/>
    <property type="project" value="UniProtKB-KW"/>
</dbReference>
<dbReference type="GO" id="GO:0019843">
    <property type="term" value="F:rRNA binding"/>
    <property type="evidence" value="ECO:0007669"/>
    <property type="project" value="UniProtKB-KW"/>
</dbReference>
<dbReference type="GO" id="GO:0003735">
    <property type="term" value="F:structural constituent of ribosome"/>
    <property type="evidence" value="ECO:0007669"/>
    <property type="project" value="InterPro"/>
</dbReference>
<dbReference type="GO" id="GO:0006412">
    <property type="term" value="P:translation"/>
    <property type="evidence" value="ECO:0007669"/>
    <property type="project" value="UniProtKB-UniRule"/>
</dbReference>
<dbReference type="Gene3D" id="4.10.830.30">
    <property type="entry name" value="Ribosomal protein L31"/>
    <property type="match status" value="1"/>
</dbReference>
<dbReference type="HAMAP" id="MF_00501">
    <property type="entry name" value="Ribosomal_bL31_1"/>
    <property type="match status" value="1"/>
</dbReference>
<dbReference type="InterPro" id="IPR034704">
    <property type="entry name" value="Ribosomal_bL28/bL31-like_sf"/>
</dbReference>
<dbReference type="InterPro" id="IPR002150">
    <property type="entry name" value="Ribosomal_bL31"/>
</dbReference>
<dbReference type="InterPro" id="IPR027491">
    <property type="entry name" value="Ribosomal_bL31_A"/>
</dbReference>
<dbReference type="InterPro" id="IPR042105">
    <property type="entry name" value="Ribosomal_bL31_sf"/>
</dbReference>
<dbReference type="NCBIfam" id="TIGR00105">
    <property type="entry name" value="L31"/>
    <property type="match status" value="1"/>
</dbReference>
<dbReference type="NCBIfam" id="NF000612">
    <property type="entry name" value="PRK00019.1"/>
    <property type="match status" value="1"/>
</dbReference>
<dbReference type="NCBIfam" id="NF001809">
    <property type="entry name" value="PRK00528.1"/>
    <property type="match status" value="1"/>
</dbReference>
<dbReference type="PANTHER" id="PTHR33280">
    <property type="entry name" value="50S RIBOSOMAL PROTEIN L31, CHLOROPLASTIC"/>
    <property type="match status" value="1"/>
</dbReference>
<dbReference type="PANTHER" id="PTHR33280:SF6">
    <property type="entry name" value="LARGE RIBOSOMAL SUBUNIT PROTEIN BL31A"/>
    <property type="match status" value="1"/>
</dbReference>
<dbReference type="Pfam" id="PF01197">
    <property type="entry name" value="Ribosomal_L31"/>
    <property type="match status" value="1"/>
</dbReference>
<dbReference type="PRINTS" id="PR01249">
    <property type="entry name" value="RIBOSOMALL31"/>
</dbReference>
<dbReference type="SUPFAM" id="SSF143800">
    <property type="entry name" value="L28p-like"/>
    <property type="match status" value="1"/>
</dbReference>
<dbReference type="PROSITE" id="PS01143">
    <property type="entry name" value="RIBOSOMAL_L31"/>
    <property type="match status" value="1"/>
</dbReference>
<comment type="function">
    <text evidence="1">Binds the 23S rRNA.</text>
</comment>
<comment type="cofactor">
    <cofactor evidence="1">
        <name>Zn(2+)</name>
        <dbReference type="ChEBI" id="CHEBI:29105"/>
    </cofactor>
    <text evidence="1">Binds 1 zinc ion per subunit.</text>
</comment>
<comment type="subunit">
    <text evidence="1">Part of the 50S ribosomal subunit.</text>
</comment>
<comment type="similarity">
    <text evidence="1">Belongs to the bacterial ribosomal protein bL31 family. Type A subfamily.</text>
</comment>
<protein>
    <recommendedName>
        <fullName evidence="1">Large ribosomal subunit protein bL31</fullName>
    </recommendedName>
    <alternativeName>
        <fullName evidence="2">50S ribosomal protein L31</fullName>
    </alternativeName>
</protein>